<dbReference type="EC" id="4.6.1.12" evidence="1"/>
<dbReference type="EMBL" id="CR543861">
    <property type="protein sequence ID" value="CAG68819.1"/>
    <property type="molecule type" value="Genomic_DNA"/>
</dbReference>
<dbReference type="RefSeq" id="WP_004927337.1">
    <property type="nucleotide sequence ID" value="NC_005966.1"/>
</dbReference>
<dbReference type="SMR" id="Q6FAU4"/>
<dbReference type="STRING" id="202950.GCA_001485005_00375"/>
<dbReference type="GeneID" id="45234356"/>
<dbReference type="KEGG" id="aci:ACIAD1996"/>
<dbReference type="eggNOG" id="COG0245">
    <property type="taxonomic scope" value="Bacteria"/>
</dbReference>
<dbReference type="HOGENOM" id="CLU_084630_2_0_6"/>
<dbReference type="OrthoDB" id="9804336at2"/>
<dbReference type="BioCyc" id="ASP62977:ACIAD_RS09185-MONOMER"/>
<dbReference type="UniPathway" id="UPA00056">
    <property type="reaction ID" value="UER00095"/>
</dbReference>
<dbReference type="Proteomes" id="UP000000430">
    <property type="component" value="Chromosome"/>
</dbReference>
<dbReference type="GO" id="GO:0008685">
    <property type="term" value="F:2-C-methyl-D-erythritol 2,4-cyclodiphosphate synthase activity"/>
    <property type="evidence" value="ECO:0007669"/>
    <property type="project" value="UniProtKB-UniRule"/>
</dbReference>
<dbReference type="GO" id="GO:0046872">
    <property type="term" value="F:metal ion binding"/>
    <property type="evidence" value="ECO:0007669"/>
    <property type="project" value="UniProtKB-KW"/>
</dbReference>
<dbReference type="GO" id="GO:0019288">
    <property type="term" value="P:isopentenyl diphosphate biosynthetic process, methylerythritol 4-phosphate pathway"/>
    <property type="evidence" value="ECO:0007669"/>
    <property type="project" value="UniProtKB-UniRule"/>
</dbReference>
<dbReference type="GO" id="GO:0016114">
    <property type="term" value="P:terpenoid biosynthetic process"/>
    <property type="evidence" value="ECO:0007669"/>
    <property type="project" value="InterPro"/>
</dbReference>
<dbReference type="CDD" id="cd00554">
    <property type="entry name" value="MECDP_synthase"/>
    <property type="match status" value="1"/>
</dbReference>
<dbReference type="FunFam" id="3.30.1330.50:FF:000001">
    <property type="entry name" value="2-C-methyl-D-erythritol 2,4-cyclodiphosphate synthase"/>
    <property type="match status" value="1"/>
</dbReference>
<dbReference type="Gene3D" id="3.30.1330.50">
    <property type="entry name" value="2-C-methyl-D-erythritol 2,4-cyclodiphosphate synthase"/>
    <property type="match status" value="1"/>
</dbReference>
<dbReference type="HAMAP" id="MF_00107">
    <property type="entry name" value="IspF"/>
    <property type="match status" value="1"/>
</dbReference>
<dbReference type="InterPro" id="IPR003526">
    <property type="entry name" value="MECDP_synthase"/>
</dbReference>
<dbReference type="InterPro" id="IPR020555">
    <property type="entry name" value="MECDP_synthase_CS"/>
</dbReference>
<dbReference type="InterPro" id="IPR036571">
    <property type="entry name" value="MECDP_synthase_sf"/>
</dbReference>
<dbReference type="NCBIfam" id="TIGR00151">
    <property type="entry name" value="ispF"/>
    <property type="match status" value="1"/>
</dbReference>
<dbReference type="PANTHER" id="PTHR43181">
    <property type="entry name" value="2-C-METHYL-D-ERYTHRITOL 2,4-CYCLODIPHOSPHATE SYNTHASE, CHLOROPLASTIC"/>
    <property type="match status" value="1"/>
</dbReference>
<dbReference type="PANTHER" id="PTHR43181:SF1">
    <property type="entry name" value="2-C-METHYL-D-ERYTHRITOL 2,4-CYCLODIPHOSPHATE SYNTHASE, CHLOROPLASTIC"/>
    <property type="match status" value="1"/>
</dbReference>
<dbReference type="Pfam" id="PF02542">
    <property type="entry name" value="YgbB"/>
    <property type="match status" value="1"/>
</dbReference>
<dbReference type="SUPFAM" id="SSF69765">
    <property type="entry name" value="IpsF-like"/>
    <property type="match status" value="1"/>
</dbReference>
<dbReference type="PROSITE" id="PS01350">
    <property type="entry name" value="ISPF"/>
    <property type="match status" value="1"/>
</dbReference>
<keyword id="KW-0414">Isoprene biosynthesis</keyword>
<keyword id="KW-0456">Lyase</keyword>
<keyword id="KW-0479">Metal-binding</keyword>
<gene>
    <name evidence="1" type="primary">ispF</name>
    <name type="ordered locus">ACIAD1996</name>
</gene>
<organism>
    <name type="scientific">Acinetobacter baylyi (strain ATCC 33305 / BD413 / ADP1)</name>
    <dbReference type="NCBI Taxonomy" id="62977"/>
    <lineage>
        <taxon>Bacteria</taxon>
        <taxon>Pseudomonadati</taxon>
        <taxon>Pseudomonadota</taxon>
        <taxon>Gammaproteobacteria</taxon>
        <taxon>Moraxellales</taxon>
        <taxon>Moraxellaceae</taxon>
        <taxon>Acinetobacter</taxon>
    </lineage>
</organism>
<protein>
    <recommendedName>
        <fullName evidence="1">2-C-methyl-D-erythritol 2,4-cyclodiphosphate synthase</fullName>
        <shortName evidence="1">MECDP-synthase</shortName>
        <shortName evidence="1">MECPP-synthase</shortName>
        <shortName evidence="1">MECPS</shortName>
        <ecNumber evidence="1">4.6.1.12</ecNumber>
    </recommendedName>
</protein>
<reference key="1">
    <citation type="journal article" date="2004" name="Nucleic Acids Res.">
        <title>Unique features revealed by the genome sequence of Acinetobacter sp. ADP1, a versatile and naturally transformation competent bacterium.</title>
        <authorList>
            <person name="Barbe V."/>
            <person name="Vallenet D."/>
            <person name="Fonknechten N."/>
            <person name="Kreimeyer A."/>
            <person name="Oztas S."/>
            <person name="Labarre L."/>
            <person name="Cruveiller S."/>
            <person name="Robert C."/>
            <person name="Duprat S."/>
            <person name="Wincker P."/>
            <person name="Ornston L.N."/>
            <person name="Weissenbach J."/>
            <person name="Marliere P."/>
            <person name="Cohen G.N."/>
            <person name="Medigue C."/>
        </authorList>
    </citation>
    <scope>NUCLEOTIDE SEQUENCE [LARGE SCALE GENOMIC DNA]</scope>
    <source>
        <strain>ATCC 33305 / BD413 / ADP1</strain>
    </source>
</reference>
<accession>Q6FAU4</accession>
<name>ISPF_ACIAD</name>
<evidence type="ECO:0000255" key="1">
    <source>
        <dbReference type="HAMAP-Rule" id="MF_00107"/>
    </source>
</evidence>
<comment type="function">
    <text evidence="1">Involved in the biosynthesis of isopentenyl diphosphate (IPP) and dimethylallyl diphosphate (DMAPP), two major building blocks of isoprenoid compounds. Catalyzes the conversion of 4-diphosphocytidyl-2-C-methyl-D-erythritol 2-phosphate (CDP-ME2P) to 2-C-methyl-D-erythritol 2,4-cyclodiphosphate (ME-CPP) with a corresponding release of cytidine 5-monophosphate (CMP).</text>
</comment>
<comment type="catalytic activity">
    <reaction evidence="1">
        <text>4-CDP-2-C-methyl-D-erythritol 2-phosphate = 2-C-methyl-D-erythritol 2,4-cyclic diphosphate + CMP</text>
        <dbReference type="Rhea" id="RHEA:23864"/>
        <dbReference type="ChEBI" id="CHEBI:57919"/>
        <dbReference type="ChEBI" id="CHEBI:58483"/>
        <dbReference type="ChEBI" id="CHEBI:60377"/>
        <dbReference type="EC" id="4.6.1.12"/>
    </reaction>
</comment>
<comment type="cofactor">
    <cofactor evidence="1">
        <name>a divalent metal cation</name>
        <dbReference type="ChEBI" id="CHEBI:60240"/>
    </cofactor>
    <text evidence="1">Binds 1 divalent metal cation per subunit.</text>
</comment>
<comment type="pathway">
    <text evidence="1">Isoprenoid biosynthesis; isopentenyl diphosphate biosynthesis via DXP pathway; isopentenyl diphosphate from 1-deoxy-D-xylulose 5-phosphate: step 4/6.</text>
</comment>
<comment type="subunit">
    <text evidence="1">Homotrimer.</text>
</comment>
<comment type="similarity">
    <text evidence="1">Belongs to the IspF family.</text>
</comment>
<sequence length="163" mass="17626">MVVQIRIGQGMDVHAFEEGDHVTLAGIKIPHTHGLKAHSDGDVVLHALSDALLGALALGDIGQHFPDTDVQFKGADSRVLLKHVYQLILDRGYALNNADITVACERPKLAKYNLEMRQSIADVLDVDVTQISVKATTTEKLGFTGRQEGILATATVLVSYQAK</sequence>
<feature type="chain" id="PRO_0000189430" description="2-C-methyl-D-erythritol 2,4-cyclodiphosphate synthase">
    <location>
        <begin position="1"/>
        <end position="163"/>
    </location>
</feature>
<feature type="binding site" evidence="1">
    <location>
        <begin position="12"/>
        <end position="14"/>
    </location>
    <ligand>
        <name>4-CDP-2-C-methyl-D-erythritol 2-phosphate</name>
        <dbReference type="ChEBI" id="CHEBI:57919"/>
    </ligand>
</feature>
<feature type="binding site" evidence="1">
    <location>
        <position position="12"/>
    </location>
    <ligand>
        <name>a divalent metal cation</name>
        <dbReference type="ChEBI" id="CHEBI:60240"/>
    </ligand>
</feature>
<feature type="binding site" evidence="1">
    <location>
        <position position="14"/>
    </location>
    <ligand>
        <name>a divalent metal cation</name>
        <dbReference type="ChEBI" id="CHEBI:60240"/>
    </ligand>
</feature>
<feature type="binding site" evidence="1">
    <location>
        <begin position="38"/>
        <end position="39"/>
    </location>
    <ligand>
        <name>4-CDP-2-C-methyl-D-erythritol 2-phosphate</name>
        <dbReference type="ChEBI" id="CHEBI:57919"/>
    </ligand>
</feature>
<feature type="binding site" evidence="1">
    <location>
        <position position="46"/>
    </location>
    <ligand>
        <name>a divalent metal cation</name>
        <dbReference type="ChEBI" id="CHEBI:60240"/>
    </ligand>
</feature>
<feature type="binding site" evidence="1">
    <location>
        <begin position="60"/>
        <end position="62"/>
    </location>
    <ligand>
        <name>4-CDP-2-C-methyl-D-erythritol 2-phosphate</name>
        <dbReference type="ChEBI" id="CHEBI:57919"/>
    </ligand>
</feature>
<feature type="binding site" evidence="1">
    <location>
        <begin position="65"/>
        <end position="69"/>
    </location>
    <ligand>
        <name>4-CDP-2-C-methyl-D-erythritol 2-phosphate</name>
        <dbReference type="ChEBI" id="CHEBI:57919"/>
    </ligand>
</feature>
<feature type="binding site" evidence="1">
    <location>
        <begin position="136"/>
        <end position="139"/>
    </location>
    <ligand>
        <name>4-CDP-2-C-methyl-D-erythritol 2-phosphate</name>
        <dbReference type="ChEBI" id="CHEBI:57919"/>
    </ligand>
</feature>
<feature type="binding site" evidence="1">
    <location>
        <position position="143"/>
    </location>
    <ligand>
        <name>4-CDP-2-C-methyl-D-erythritol 2-phosphate</name>
        <dbReference type="ChEBI" id="CHEBI:57919"/>
    </ligand>
</feature>
<feature type="binding site" evidence="1">
    <location>
        <position position="146"/>
    </location>
    <ligand>
        <name>4-CDP-2-C-methyl-D-erythritol 2-phosphate</name>
        <dbReference type="ChEBI" id="CHEBI:57919"/>
    </ligand>
</feature>
<feature type="site" description="Transition state stabilizer" evidence="1">
    <location>
        <position position="38"/>
    </location>
</feature>
<feature type="site" description="Transition state stabilizer" evidence="1">
    <location>
        <position position="137"/>
    </location>
</feature>
<proteinExistence type="inferred from homology"/>